<gene>
    <name type="ordered locus">LBUL_1430</name>
</gene>
<reference key="1">
    <citation type="journal article" date="2006" name="Proc. Natl. Acad. Sci. U.S.A.">
        <title>Comparative genomics of the lactic acid bacteria.</title>
        <authorList>
            <person name="Makarova K.S."/>
            <person name="Slesarev A."/>
            <person name="Wolf Y.I."/>
            <person name="Sorokin A."/>
            <person name="Mirkin B."/>
            <person name="Koonin E.V."/>
            <person name="Pavlov A."/>
            <person name="Pavlova N."/>
            <person name="Karamychev V."/>
            <person name="Polouchine N."/>
            <person name="Shakhova V."/>
            <person name="Grigoriev I."/>
            <person name="Lou Y."/>
            <person name="Rohksar D."/>
            <person name="Lucas S."/>
            <person name="Huang K."/>
            <person name="Goodstein D.M."/>
            <person name="Hawkins T."/>
            <person name="Plengvidhya V."/>
            <person name="Welker D."/>
            <person name="Hughes J."/>
            <person name="Goh Y."/>
            <person name="Benson A."/>
            <person name="Baldwin K."/>
            <person name="Lee J.-H."/>
            <person name="Diaz-Muniz I."/>
            <person name="Dosti B."/>
            <person name="Smeianov V."/>
            <person name="Wechter W."/>
            <person name="Barabote R."/>
            <person name="Lorca G."/>
            <person name="Altermann E."/>
            <person name="Barrangou R."/>
            <person name="Ganesan B."/>
            <person name="Xie Y."/>
            <person name="Rawsthorne H."/>
            <person name="Tamir D."/>
            <person name="Parker C."/>
            <person name="Breidt F."/>
            <person name="Broadbent J.R."/>
            <person name="Hutkins R."/>
            <person name="O'Sullivan D."/>
            <person name="Steele J."/>
            <person name="Unlu G."/>
            <person name="Saier M.H. Jr."/>
            <person name="Klaenhammer T."/>
            <person name="Richardson P."/>
            <person name="Kozyavkin S."/>
            <person name="Weimer B.C."/>
            <person name="Mills D.A."/>
        </authorList>
    </citation>
    <scope>NUCLEOTIDE SEQUENCE [LARGE SCALE GENOMIC DNA]</scope>
    <source>
        <strain>ATCC BAA-365 / Lb-18</strain>
    </source>
</reference>
<organism>
    <name type="scientific">Lactobacillus delbrueckii subsp. bulgaricus (strain ATCC BAA-365 / Lb-18)</name>
    <dbReference type="NCBI Taxonomy" id="321956"/>
    <lineage>
        <taxon>Bacteria</taxon>
        <taxon>Bacillati</taxon>
        <taxon>Bacillota</taxon>
        <taxon>Bacilli</taxon>
        <taxon>Lactobacillales</taxon>
        <taxon>Lactobacillaceae</taxon>
        <taxon>Lactobacillus</taxon>
    </lineage>
</organism>
<name>Y1430_LACDB</name>
<dbReference type="EMBL" id="CP000412">
    <property type="protein sequence ID" value="ABJ58939.1"/>
    <property type="molecule type" value="Genomic_DNA"/>
</dbReference>
<dbReference type="RefSeq" id="WP_003623147.1">
    <property type="nucleotide sequence ID" value="NC_008529.1"/>
</dbReference>
<dbReference type="SMR" id="Q049D3"/>
<dbReference type="KEGG" id="lbu:LBUL_1430"/>
<dbReference type="HOGENOM" id="CLU_140243_3_1_9"/>
<dbReference type="BioCyc" id="LDEL321956:LBUL_RS06745-MONOMER"/>
<dbReference type="Gene3D" id="1.20.1500.10">
    <property type="entry name" value="YheA/YmcA-like"/>
    <property type="match status" value="1"/>
</dbReference>
<dbReference type="HAMAP" id="MF_01526">
    <property type="entry name" value="UPF0342"/>
    <property type="match status" value="1"/>
</dbReference>
<dbReference type="InterPro" id="IPR010368">
    <property type="entry name" value="Com_YlbF"/>
</dbReference>
<dbReference type="InterPro" id="IPR023378">
    <property type="entry name" value="YheA/YmcA-like_dom_sf"/>
</dbReference>
<dbReference type="Pfam" id="PF06133">
    <property type="entry name" value="Com_YlbF"/>
    <property type="match status" value="1"/>
</dbReference>
<dbReference type="SUPFAM" id="SSF158622">
    <property type="entry name" value="YheA/YmcA-like"/>
    <property type="match status" value="1"/>
</dbReference>
<protein>
    <recommendedName>
        <fullName evidence="1">UPF0342 protein LBUL_1430</fullName>
    </recommendedName>
</protein>
<sequence>MVNIYDTANQLANDLRETQQFLALKEAMDAVKADEGSLALFKELDAAQMEIMEAQQTGKELTEEQQDHFKSLNERVSQNTTLQSMLLAEQAVYTLLNDVQKNIGQPLSEAYEDLRKA</sequence>
<comment type="similarity">
    <text evidence="1">Belongs to the UPF0342 family.</text>
</comment>
<proteinExistence type="inferred from homology"/>
<accession>Q049D3</accession>
<feature type="chain" id="PRO_0000292733" description="UPF0342 protein LBUL_1430">
    <location>
        <begin position="1"/>
        <end position="117"/>
    </location>
</feature>
<evidence type="ECO:0000255" key="1">
    <source>
        <dbReference type="HAMAP-Rule" id="MF_01526"/>
    </source>
</evidence>